<sequence>MELKKFIRDIPDFPKKGIIFKDITPLLKDKEAFNLAIEKMKDYYKDFDIDYIVGIEARGFIIGTPLALALNKGFIPIRKPGKLPAERISTSYELEYGTNEIEIHRDAIQPGDKILLVDDLLATGGTVKAAIELINKLQGEIVSLGFLIELVDLKGREKLEGYDVFTLLQE</sequence>
<gene>
    <name evidence="1" type="primary">apt</name>
    <name type="ordered locus">Hore_12200</name>
</gene>
<protein>
    <recommendedName>
        <fullName evidence="1">Adenine phosphoribosyltransferase</fullName>
        <shortName evidence="1">APRT</shortName>
        <ecNumber evidence="1">2.4.2.7</ecNumber>
    </recommendedName>
</protein>
<comment type="function">
    <text evidence="1">Catalyzes a salvage reaction resulting in the formation of AMP, that is energically less costly than de novo synthesis.</text>
</comment>
<comment type="catalytic activity">
    <reaction evidence="1">
        <text>AMP + diphosphate = 5-phospho-alpha-D-ribose 1-diphosphate + adenine</text>
        <dbReference type="Rhea" id="RHEA:16609"/>
        <dbReference type="ChEBI" id="CHEBI:16708"/>
        <dbReference type="ChEBI" id="CHEBI:33019"/>
        <dbReference type="ChEBI" id="CHEBI:58017"/>
        <dbReference type="ChEBI" id="CHEBI:456215"/>
        <dbReference type="EC" id="2.4.2.7"/>
    </reaction>
</comment>
<comment type="pathway">
    <text evidence="1">Purine metabolism; AMP biosynthesis via salvage pathway; AMP from adenine: step 1/1.</text>
</comment>
<comment type="subunit">
    <text evidence="1">Homodimer.</text>
</comment>
<comment type="subcellular location">
    <subcellularLocation>
        <location evidence="1">Cytoplasm</location>
    </subcellularLocation>
</comment>
<comment type="similarity">
    <text evidence="1">Belongs to the purine/pyrimidine phosphoribosyltransferase family.</text>
</comment>
<keyword id="KW-0963">Cytoplasm</keyword>
<keyword id="KW-0328">Glycosyltransferase</keyword>
<keyword id="KW-0660">Purine salvage</keyword>
<keyword id="KW-1185">Reference proteome</keyword>
<keyword id="KW-0808">Transferase</keyword>
<accession>B8CXF1</accession>
<organism>
    <name type="scientific">Halothermothrix orenii (strain H 168 / OCM 544 / DSM 9562)</name>
    <dbReference type="NCBI Taxonomy" id="373903"/>
    <lineage>
        <taxon>Bacteria</taxon>
        <taxon>Bacillati</taxon>
        <taxon>Bacillota</taxon>
        <taxon>Clostridia</taxon>
        <taxon>Halanaerobiales</taxon>
        <taxon>Halothermotrichaceae</taxon>
        <taxon>Halothermothrix</taxon>
    </lineage>
</organism>
<feature type="chain" id="PRO_1000201667" description="Adenine phosphoribosyltransferase">
    <location>
        <begin position="1"/>
        <end position="170"/>
    </location>
</feature>
<name>APT_HALOH</name>
<proteinExistence type="inferred from homology"/>
<evidence type="ECO:0000255" key="1">
    <source>
        <dbReference type="HAMAP-Rule" id="MF_00004"/>
    </source>
</evidence>
<reference key="1">
    <citation type="journal article" date="2009" name="PLoS ONE">
        <title>Genome analysis of the anaerobic thermohalophilic bacterium Halothermothrix orenii.</title>
        <authorList>
            <person name="Mavromatis K."/>
            <person name="Ivanova N."/>
            <person name="Anderson I."/>
            <person name="Lykidis A."/>
            <person name="Hooper S.D."/>
            <person name="Sun H."/>
            <person name="Kunin V."/>
            <person name="Lapidus A."/>
            <person name="Hugenholtz P."/>
            <person name="Patel B."/>
            <person name="Kyrpides N.C."/>
        </authorList>
    </citation>
    <scope>NUCLEOTIDE SEQUENCE [LARGE SCALE GENOMIC DNA]</scope>
    <source>
        <strain>H 168 / OCM 544 / DSM 9562</strain>
    </source>
</reference>
<dbReference type="EC" id="2.4.2.7" evidence="1"/>
<dbReference type="EMBL" id="CP001098">
    <property type="protein sequence ID" value="ACL69970.1"/>
    <property type="molecule type" value="Genomic_DNA"/>
</dbReference>
<dbReference type="RefSeq" id="WP_012636154.1">
    <property type="nucleotide sequence ID" value="NC_011899.1"/>
</dbReference>
<dbReference type="SMR" id="B8CXF1"/>
<dbReference type="STRING" id="373903.Hore_12200"/>
<dbReference type="KEGG" id="hor:Hore_12200"/>
<dbReference type="eggNOG" id="COG0503">
    <property type="taxonomic scope" value="Bacteria"/>
</dbReference>
<dbReference type="HOGENOM" id="CLU_063339_3_0_9"/>
<dbReference type="OrthoDB" id="9803963at2"/>
<dbReference type="UniPathway" id="UPA00588">
    <property type="reaction ID" value="UER00646"/>
</dbReference>
<dbReference type="Proteomes" id="UP000000719">
    <property type="component" value="Chromosome"/>
</dbReference>
<dbReference type="GO" id="GO:0005737">
    <property type="term" value="C:cytoplasm"/>
    <property type="evidence" value="ECO:0007669"/>
    <property type="project" value="UniProtKB-SubCell"/>
</dbReference>
<dbReference type="GO" id="GO:0002055">
    <property type="term" value="F:adenine binding"/>
    <property type="evidence" value="ECO:0007669"/>
    <property type="project" value="TreeGrafter"/>
</dbReference>
<dbReference type="GO" id="GO:0003999">
    <property type="term" value="F:adenine phosphoribosyltransferase activity"/>
    <property type="evidence" value="ECO:0007669"/>
    <property type="project" value="UniProtKB-UniRule"/>
</dbReference>
<dbReference type="GO" id="GO:0016208">
    <property type="term" value="F:AMP binding"/>
    <property type="evidence" value="ECO:0007669"/>
    <property type="project" value="TreeGrafter"/>
</dbReference>
<dbReference type="GO" id="GO:0006168">
    <property type="term" value="P:adenine salvage"/>
    <property type="evidence" value="ECO:0007669"/>
    <property type="project" value="InterPro"/>
</dbReference>
<dbReference type="GO" id="GO:0044209">
    <property type="term" value="P:AMP salvage"/>
    <property type="evidence" value="ECO:0007669"/>
    <property type="project" value="UniProtKB-UniRule"/>
</dbReference>
<dbReference type="GO" id="GO:0006166">
    <property type="term" value="P:purine ribonucleoside salvage"/>
    <property type="evidence" value="ECO:0007669"/>
    <property type="project" value="UniProtKB-KW"/>
</dbReference>
<dbReference type="CDD" id="cd06223">
    <property type="entry name" value="PRTases_typeI"/>
    <property type="match status" value="1"/>
</dbReference>
<dbReference type="FunFam" id="3.40.50.2020:FF:000004">
    <property type="entry name" value="Adenine phosphoribosyltransferase"/>
    <property type="match status" value="1"/>
</dbReference>
<dbReference type="Gene3D" id="3.40.50.2020">
    <property type="match status" value="1"/>
</dbReference>
<dbReference type="HAMAP" id="MF_00004">
    <property type="entry name" value="Aden_phosphoribosyltr"/>
    <property type="match status" value="1"/>
</dbReference>
<dbReference type="InterPro" id="IPR005764">
    <property type="entry name" value="Ade_phspho_trans"/>
</dbReference>
<dbReference type="InterPro" id="IPR000836">
    <property type="entry name" value="PRibTrfase_dom"/>
</dbReference>
<dbReference type="InterPro" id="IPR029057">
    <property type="entry name" value="PRTase-like"/>
</dbReference>
<dbReference type="InterPro" id="IPR050054">
    <property type="entry name" value="UPRTase/APRTase"/>
</dbReference>
<dbReference type="NCBIfam" id="TIGR01090">
    <property type="entry name" value="apt"/>
    <property type="match status" value="1"/>
</dbReference>
<dbReference type="NCBIfam" id="NF002633">
    <property type="entry name" value="PRK02304.1-2"/>
    <property type="match status" value="1"/>
</dbReference>
<dbReference type="NCBIfam" id="NF002634">
    <property type="entry name" value="PRK02304.1-3"/>
    <property type="match status" value="1"/>
</dbReference>
<dbReference type="NCBIfam" id="NF002636">
    <property type="entry name" value="PRK02304.1-5"/>
    <property type="match status" value="1"/>
</dbReference>
<dbReference type="PANTHER" id="PTHR32315">
    <property type="entry name" value="ADENINE PHOSPHORIBOSYLTRANSFERASE"/>
    <property type="match status" value="1"/>
</dbReference>
<dbReference type="PANTHER" id="PTHR32315:SF3">
    <property type="entry name" value="ADENINE PHOSPHORIBOSYLTRANSFERASE"/>
    <property type="match status" value="1"/>
</dbReference>
<dbReference type="Pfam" id="PF00156">
    <property type="entry name" value="Pribosyltran"/>
    <property type="match status" value="1"/>
</dbReference>
<dbReference type="SUPFAM" id="SSF53271">
    <property type="entry name" value="PRTase-like"/>
    <property type="match status" value="1"/>
</dbReference>
<dbReference type="PROSITE" id="PS00103">
    <property type="entry name" value="PUR_PYR_PR_TRANSFER"/>
    <property type="match status" value="1"/>
</dbReference>